<keyword id="KW-0001">2Fe-2S</keyword>
<keyword id="KW-0004">4Fe-4S</keyword>
<keyword id="KW-0093">Biotin biosynthesis</keyword>
<keyword id="KW-0408">Iron</keyword>
<keyword id="KW-0411">Iron-sulfur</keyword>
<keyword id="KW-0479">Metal-binding</keyword>
<keyword id="KW-0949">S-adenosyl-L-methionine</keyword>
<keyword id="KW-0808">Transferase</keyword>
<evidence type="ECO:0000255" key="1">
    <source>
        <dbReference type="HAMAP-Rule" id="MF_01694"/>
    </source>
</evidence>
<evidence type="ECO:0000255" key="2">
    <source>
        <dbReference type="PROSITE-ProRule" id="PRU01266"/>
    </source>
</evidence>
<evidence type="ECO:0000305" key="3"/>
<dbReference type="EC" id="2.8.1.6" evidence="1"/>
<dbReference type="EMBL" id="CU468230">
    <property type="protein sequence ID" value="CAP01460.1"/>
    <property type="status" value="ALT_INIT"/>
    <property type="molecule type" value="Genomic_DNA"/>
</dbReference>
<dbReference type="SMR" id="B0VR41"/>
<dbReference type="KEGG" id="abm:ABSDF2133"/>
<dbReference type="HOGENOM" id="CLU_033172_1_2_6"/>
<dbReference type="UniPathway" id="UPA00078">
    <property type="reaction ID" value="UER00162"/>
</dbReference>
<dbReference type="Proteomes" id="UP000001741">
    <property type="component" value="Chromosome"/>
</dbReference>
<dbReference type="GO" id="GO:0051537">
    <property type="term" value="F:2 iron, 2 sulfur cluster binding"/>
    <property type="evidence" value="ECO:0007669"/>
    <property type="project" value="UniProtKB-KW"/>
</dbReference>
<dbReference type="GO" id="GO:0051539">
    <property type="term" value="F:4 iron, 4 sulfur cluster binding"/>
    <property type="evidence" value="ECO:0007669"/>
    <property type="project" value="UniProtKB-KW"/>
</dbReference>
<dbReference type="GO" id="GO:0004076">
    <property type="term" value="F:biotin synthase activity"/>
    <property type="evidence" value="ECO:0007669"/>
    <property type="project" value="UniProtKB-UniRule"/>
</dbReference>
<dbReference type="GO" id="GO:0005506">
    <property type="term" value="F:iron ion binding"/>
    <property type="evidence" value="ECO:0007669"/>
    <property type="project" value="UniProtKB-UniRule"/>
</dbReference>
<dbReference type="GO" id="GO:0009102">
    <property type="term" value="P:biotin biosynthetic process"/>
    <property type="evidence" value="ECO:0007669"/>
    <property type="project" value="UniProtKB-UniRule"/>
</dbReference>
<dbReference type="CDD" id="cd01335">
    <property type="entry name" value="Radical_SAM"/>
    <property type="match status" value="1"/>
</dbReference>
<dbReference type="FunFam" id="3.20.20.70:FF:000011">
    <property type="entry name" value="Biotin synthase"/>
    <property type="match status" value="1"/>
</dbReference>
<dbReference type="Gene3D" id="3.20.20.70">
    <property type="entry name" value="Aldolase class I"/>
    <property type="match status" value="1"/>
</dbReference>
<dbReference type="HAMAP" id="MF_01694">
    <property type="entry name" value="BioB"/>
    <property type="match status" value="1"/>
</dbReference>
<dbReference type="InterPro" id="IPR013785">
    <property type="entry name" value="Aldolase_TIM"/>
</dbReference>
<dbReference type="InterPro" id="IPR010722">
    <property type="entry name" value="BATS_dom"/>
</dbReference>
<dbReference type="InterPro" id="IPR002684">
    <property type="entry name" value="Biotin_synth/BioAB"/>
</dbReference>
<dbReference type="InterPro" id="IPR024177">
    <property type="entry name" value="Biotin_synthase"/>
</dbReference>
<dbReference type="InterPro" id="IPR006638">
    <property type="entry name" value="Elp3/MiaA/NifB-like_rSAM"/>
</dbReference>
<dbReference type="InterPro" id="IPR007197">
    <property type="entry name" value="rSAM"/>
</dbReference>
<dbReference type="NCBIfam" id="TIGR00433">
    <property type="entry name" value="bioB"/>
    <property type="match status" value="1"/>
</dbReference>
<dbReference type="PANTHER" id="PTHR22976">
    <property type="entry name" value="BIOTIN SYNTHASE"/>
    <property type="match status" value="1"/>
</dbReference>
<dbReference type="PANTHER" id="PTHR22976:SF2">
    <property type="entry name" value="BIOTIN SYNTHASE, MITOCHONDRIAL"/>
    <property type="match status" value="1"/>
</dbReference>
<dbReference type="Pfam" id="PF06968">
    <property type="entry name" value="BATS"/>
    <property type="match status" value="1"/>
</dbReference>
<dbReference type="Pfam" id="PF04055">
    <property type="entry name" value="Radical_SAM"/>
    <property type="match status" value="1"/>
</dbReference>
<dbReference type="PIRSF" id="PIRSF001619">
    <property type="entry name" value="Biotin_synth"/>
    <property type="match status" value="1"/>
</dbReference>
<dbReference type="SFLD" id="SFLDF00272">
    <property type="entry name" value="biotin_synthase"/>
    <property type="match status" value="1"/>
</dbReference>
<dbReference type="SFLD" id="SFLDS00029">
    <property type="entry name" value="Radical_SAM"/>
    <property type="match status" value="1"/>
</dbReference>
<dbReference type="SMART" id="SM00876">
    <property type="entry name" value="BATS"/>
    <property type="match status" value="1"/>
</dbReference>
<dbReference type="SMART" id="SM00729">
    <property type="entry name" value="Elp3"/>
    <property type="match status" value="1"/>
</dbReference>
<dbReference type="SUPFAM" id="SSF102114">
    <property type="entry name" value="Radical SAM enzymes"/>
    <property type="match status" value="1"/>
</dbReference>
<dbReference type="PROSITE" id="PS51918">
    <property type="entry name" value="RADICAL_SAM"/>
    <property type="match status" value="1"/>
</dbReference>
<reference key="1">
    <citation type="journal article" date="2008" name="PLoS ONE">
        <title>Comparative analysis of Acinetobacters: three genomes for three lifestyles.</title>
        <authorList>
            <person name="Vallenet D."/>
            <person name="Nordmann P."/>
            <person name="Barbe V."/>
            <person name="Poirel L."/>
            <person name="Mangenot S."/>
            <person name="Bataille E."/>
            <person name="Dossat C."/>
            <person name="Gas S."/>
            <person name="Kreimeyer A."/>
            <person name="Lenoble P."/>
            <person name="Oztas S."/>
            <person name="Poulain J."/>
            <person name="Segurens B."/>
            <person name="Robert C."/>
            <person name="Abergel C."/>
            <person name="Claverie J.-M."/>
            <person name="Raoult D."/>
            <person name="Medigue C."/>
            <person name="Weissenbach J."/>
            <person name="Cruveiller S."/>
        </authorList>
    </citation>
    <scope>NUCLEOTIDE SEQUENCE [LARGE SCALE GENOMIC DNA]</scope>
    <source>
        <strain>SDF</strain>
    </source>
</reference>
<name>BIOB_ACIBS</name>
<accession>B0VR41</accession>
<sequence length="329" mass="36658">MTLRNDWTREEIQALYEQPFLDLVFKAQQVHREHFTANTIQVSTLLSIKTGKCPEDCKYCSQSAHYDSKLEAEKRIAVEKVISEAKAAKDSGSSRFCMGAAWRNPHERDMPYVLEMVREVKALGMETCMTLGMLNQSQAERLKDAGLDYYNHNLDTSRKYYSHIISTRTFDDRLNTLDYVRQAGMKVCSGGIVGLGESREDRIGLLHELATLPIHPESVPINMLVPIEGTPLADVEKLDVIEWIRTIAVARIIMPHSYIRLSAGRESLSDSDQALAFMAGANSLFSGDKLLTTPNAGEGKDQALFNKLGLTAEKPKPTVSDLSVDAMSA</sequence>
<organism>
    <name type="scientific">Acinetobacter baumannii (strain SDF)</name>
    <dbReference type="NCBI Taxonomy" id="509170"/>
    <lineage>
        <taxon>Bacteria</taxon>
        <taxon>Pseudomonadati</taxon>
        <taxon>Pseudomonadota</taxon>
        <taxon>Gammaproteobacteria</taxon>
        <taxon>Moraxellales</taxon>
        <taxon>Moraxellaceae</taxon>
        <taxon>Acinetobacter</taxon>
        <taxon>Acinetobacter calcoaceticus/baumannii complex</taxon>
    </lineage>
</organism>
<proteinExistence type="inferred from homology"/>
<gene>
    <name evidence="1" type="primary">bioB</name>
    <name type="ordered locus">ABSDF2133</name>
</gene>
<protein>
    <recommendedName>
        <fullName evidence="1">Biotin synthase</fullName>
        <ecNumber evidence="1">2.8.1.6</ecNumber>
    </recommendedName>
</protein>
<feature type="chain" id="PRO_0000381171" description="Biotin synthase">
    <location>
        <begin position="1"/>
        <end position="329"/>
    </location>
</feature>
<feature type="domain" description="Radical SAM core" evidence="2">
    <location>
        <begin position="38"/>
        <end position="262"/>
    </location>
</feature>
<feature type="binding site" evidence="1">
    <location>
        <position position="53"/>
    </location>
    <ligand>
        <name>[4Fe-4S] cluster</name>
        <dbReference type="ChEBI" id="CHEBI:49883"/>
        <note>4Fe-4S-S-AdoMet</note>
    </ligand>
</feature>
<feature type="binding site" evidence="1">
    <location>
        <position position="57"/>
    </location>
    <ligand>
        <name>[4Fe-4S] cluster</name>
        <dbReference type="ChEBI" id="CHEBI:49883"/>
        <note>4Fe-4S-S-AdoMet</note>
    </ligand>
</feature>
<feature type="binding site" evidence="1">
    <location>
        <position position="60"/>
    </location>
    <ligand>
        <name>[4Fe-4S] cluster</name>
        <dbReference type="ChEBI" id="CHEBI:49883"/>
        <note>4Fe-4S-S-AdoMet</note>
    </ligand>
</feature>
<feature type="binding site" evidence="1">
    <location>
        <position position="97"/>
    </location>
    <ligand>
        <name>[2Fe-2S] cluster</name>
        <dbReference type="ChEBI" id="CHEBI:190135"/>
    </ligand>
</feature>
<feature type="binding site" evidence="1">
    <location>
        <position position="128"/>
    </location>
    <ligand>
        <name>[2Fe-2S] cluster</name>
        <dbReference type="ChEBI" id="CHEBI:190135"/>
    </ligand>
</feature>
<feature type="binding site" evidence="1">
    <location>
        <position position="188"/>
    </location>
    <ligand>
        <name>[2Fe-2S] cluster</name>
        <dbReference type="ChEBI" id="CHEBI:190135"/>
    </ligand>
</feature>
<feature type="binding site" evidence="1">
    <location>
        <position position="260"/>
    </location>
    <ligand>
        <name>[2Fe-2S] cluster</name>
        <dbReference type="ChEBI" id="CHEBI:190135"/>
    </ligand>
</feature>
<comment type="function">
    <text evidence="1">Catalyzes the conversion of dethiobiotin (DTB) to biotin by the insertion of a sulfur atom into dethiobiotin via a radical-based mechanism.</text>
</comment>
<comment type="catalytic activity">
    <reaction evidence="1">
        <text>(4R,5S)-dethiobiotin + (sulfur carrier)-SH + 2 reduced [2Fe-2S]-[ferredoxin] + 2 S-adenosyl-L-methionine = (sulfur carrier)-H + biotin + 2 5'-deoxyadenosine + 2 L-methionine + 2 oxidized [2Fe-2S]-[ferredoxin]</text>
        <dbReference type="Rhea" id="RHEA:22060"/>
        <dbReference type="Rhea" id="RHEA-COMP:10000"/>
        <dbReference type="Rhea" id="RHEA-COMP:10001"/>
        <dbReference type="Rhea" id="RHEA-COMP:14737"/>
        <dbReference type="Rhea" id="RHEA-COMP:14739"/>
        <dbReference type="ChEBI" id="CHEBI:17319"/>
        <dbReference type="ChEBI" id="CHEBI:29917"/>
        <dbReference type="ChEBI" id="CHEBI:33737"/>
        <dbReference type="ChEBI" id="CHEBI:33738"/>
        <dbReference type="ChEBI" id="CHEBI:57586"/>
        <dbReference type="ChEBI" id="CHEBI:57844"/>
        <dbReference type="ChEBI" id="CHEBI:59789"/>
        <dbReference type="ChEBI" id="CHEBI:64428"/>
        <dbReference type="ChEBI" id="CHEBI:149473"/>
        <dbReference type="EC" id="2.8.1.6"/>
    </reaction>
</comment>
<comment type="cofactor">
    <cofactor evidence="1">
        <name>[4Fe-4S] cluster</name>
        <dbReference type="ChEBI" id="CHEBI:49883"/>
    </cofactor>
    <text evidence="1">Binds 1 [4Fe-4S] cluster. The cluster is coordinated with 3 cysteines and an exchangeable S-adenosyl-L-methionine.</text>
</comment>
<comment type="cofactor">
    <cofactor evidence="1">
        <name>[2Fe-2S] cluster</name>
        <dbReference type="ChEBI" id="CHEBI:190135"/>
    </cofactor>
    <text evidence="1">Binds 1 [2Fe-2S] cluster. The cluster is coordinated with 3 cysteines and 1 arginine.</text>
</comment>
<comment type="pathway">
    <text evidence="1">Cofactor biosynthesis; biotin biosynthesis; biotin from 7,8-diaminononanoate: step 2/2.</text>
</comment>
<comment type="subunit">
    <text evidence="1">Homodimer.</text>
</comment>
<comment type="similarity">
    <text evidence="1">Belongs to the radical SAM superfamily. Biotin synthase family.</text>
</comment>
<comment type="sequence caution" evidence="3">
    <conflict type="erroneous initiation">
        <sequence resource="EMBL-CDS" id="CAP01460"/>
    </conflict>
</comment>